<dbReference type="EC" id="2.7.1.16" evidence="1"/>
<dbReference type="EMBL" id="AE017333">
    <property type="protein sequence ID" value="AAU41893.1"/>
    <property type="molecule type" value="Genomic_DNA"/>
</dbReference>
<dbReference type="EMBL" id="CP000002">
    <property type="protein sequence ID" value="AAU24534.1"/>
    <property type="molecule type" value="Genomic_DNA"/>
</dbReference>
<dbReference type="SMR" id="Q65GC1"/>
<dbReference type="STRING" id="279010.BL00351"/>
<dbReference type="KEGG" id="bld:BLi03027"/>
<dbReference type="KEGG" id="bli:BL00351"/>
<dbReference type="eggNOG" id="COG1069">
    <property type="taxonomic scope" value="Bacteria"/>
</dbReference>
<dbReference type="HOGENOM" id="CLU_009281_9_1_9"/>
<dbReference type="UniPathway" id="UPA00145">
    <property type="reaction ID" value="UER00566"/>
</dbReference>
<dbReference type="Proteomes" id="UP000000606">
    <property type="component" value="Chromosome"/>
</dbReference>
<dbReference type="GO" id="GO:0005737">
    <property type="term" value="C:cytoplasm"/>
    <property type="evidence" value="ECO:0007669"/>
    <property type="project" value="TreeGrafter"/>
</dbReference>
<dbReference type="GO" id="GO:0005524">
    <property type="term" value="F:ATP binding"/>
    <property type="evidence" value="ECO:0007669"/>
    <property type="project" value="UniProtKB-KW"/>
</dbReference>
<dbReference type="GO" id="GO:0019150">
    <property type="term" value="F:D-ribulokinase activity"/>
    <property type="evidence" value="ECO:0007669"/>
    <property type="project" value="RHEA"/>
</dbReference>
<dbReference type="GO" id="GO:0008741">
    <property type="term" value="F:ribulokinase activity"/>
    <property type="evidence" value="ECO:0007669"/>
    <property type="project" value="UniProtKB-UniRule"/>
</dbReference>
<dbReference type="GO" id="GO:0019569">
    <property type="term" value="P:L-arabinose catabolic process to xylulose 5-phosphate"/>
    <property type="evidence" value="ECO:0007669"/>
    <property type="project" value="UniProtKB-UniRule"/>
</dbReference>
<dbReference type="CDD" id="cd07781">
    <property type="entry name" value="ASKHA_NBD_FGGY_L-RBK"/>
    <property type="match status" value="1"/>
</dbReference>
<dbReference type="Gene3D" id="3.30.420.40">
    <property type="match status" value="2"/>
</dbReference>
<dbReference type="HAMAP" id="MF_00520">
    <property type="entry name" value="Ribulokinase"/>
    <property type="match status" value="1"/>
</dbReference>
<dbReference type="InterPro" id="IPR043129">
    <property type="entry name" value="ATPase_NBD"/>
</dbReference>
<dbReference type="InterPro" id="IPR000577">
    <property type="entry name" value="Carb_kinase_FGGY"/>
</dbReference>
<dbReference type="InterPro" id="IPR018483">
    <property type="entry name" value="Carb_kinase_FGGY_CS"/>
</dbReference>
<dbReference type="InterPro" id="IPR018485">
    <property type="entry name" value="FGGY_C"/>
</dbReference>
<dbReference type="InterPro" id="IPR018484">
    <property type="entry name" value="FGGY_N"/>
</dbReference>
<dbReference type="InterPro" id="IPR005929">
    <property type="entry name" value="Ribulokinase"/>
</dbReference>
<dbReference type="NCBIfam" id="TIGR01234">
    <property type="entry name" value="L-ribulokinase"/>
    <property type="match status" value="1"/>
</dbReference>
<dbReference type="NCBIfam" id="NF003154">
    <property type="entry name" value="PRK04123.1"/>
    <property type="match status" value="1"/>
</dbReference>
<dbReference type="PANTHER" id="PTHR43435:SF4">
    <property type="entry name" value="FGGY CARBOHYDRATE KINASE DOMAIN-CONTAINING PROTEIN"/>
    <property type="match status" value="1"/>
</dbReference>
<dbReference type="PANTHER" id="PTHR43435">
    <property type="entry name" value="RIBULOKINASE"/>
    <property type="match status" value="1"/>
</dbReference>
<dbReference type="Pfam" id="PF02782">
    <property type="entry name" value="FGGY_C"/>
    <property type="match status" value="1"/>
</dbReference>
<dbReference type="Pfam" id="PF00370">
    <property type="entry name" value="FGGY_N"/>
    <property type="match status" value="1"/>
</dbReference>
<dbReference type="PIRSF" id="PIRSF000538">
    <property type="entry name" value="GlpK"/>
    <property type="match status" value="1"/>
</dbReference>
<dbReference type="SUPFAM" id="SSF53067">
    <property type="entry name" value="Actin-like ATPase domain"/>
    <property type="match status" value="2"/>
</dbReference>
<feature type="chain" id="PRO_0000263399" description="Ribulokinase">
    <location>
        <begin position="1"/>
        <end position="552"/>
    </location>
</feature>
<protein>
    <recommendedName>
        <fullName evidence="1">Ribulokinase</fullName>
        <ecNumber evidence="1">2.7.1.16</ecNumber>
    </recommendedName>
</protein>
<sequence length="552" mass="60583">MSGRAVLVDVRTGEEIATAVKEYTHGVIDRELPVSKRKLPRDWALQHPADYIEVLEETIPSLLKQSKADPKEIIGIGIDFTACTILPVDENGTPLCMREEYASEPHSYVKLWKHHAAQEQANRLNQIAEERNEPFLQTYGGKISSEWLVPKVMQIAEEAPDIYDAAAEIMEAADWIVYMLCGTRKRNNCTAGYKAIWNNKSGYPSDDFFASLHPKLKNIVREKLTEDIYSVGEKAGGLTEEMAGKTGLLAGTAVAVANVDAHVSVPAVGITEPGKMLMIMGTSTCHMLLGEDVRMVPGMCGVVEDGILPGYVGYEAGQSCVGDHFHWLIQHFVPEAYLKEAEAEGISIYELLSQKAGSLQIGESGLLALDWWNGNRSTLVDADLTGMLLGMTLATKPEEIYRALVEATAYGTRIIIETFRQSGVPIEELYAAGGIAEKNPFIMQVYADVTNMEIKISGSPQAPALGSAIFGALAAGSMNGGYDHIEEAVAHMGKIKDKTYKPIPENVSLYDQLYAEYKELYTYFGKQNNVMKRLKKLKNIQSLSSDTGKAMA</sequence>
<accession>Q65GC1</accession>
<accession>Q62RS6</accession>
<gene>
    <name evidence="1" type="primary">araB</name>
    <name type="ordered locus">BLi03027</name>
    <name type="ordered locus">BL00351</name>
</gene>
<comment type="catalytic activity">
    <reaction evidence="1">
        <text>D-ribulose + ATP = D-ribulose 5-phosphate + ADP + H(+)</text>
        <dbReference type="Rhea" id="RHEA:17601"/>
        <dbReference type="ChEBI" id="CHEBI:15378"/>
        <dbReference type="ChEBI" id="CHEBI:17173"/>
        <dbReference type="ChEBI" id="CHEBI:30616"/>
        <dbReference type="ChEBI" id="CHEBI:58121"/>
        <dbReference type="ChEBI" id="CHEBI:456216"/>
        <dbReference type="EC" id="2.7.1.16"/>
    </reaction>
</comment>
<comment type="catalytic activity">
    <reaction evidence="1">
        <text>L-ribulose + ATP = L-ribulose 5-phosphate + ADP + H(+)</text>
        <dbReference type="Rhea" id="RHEA:22072"/>
        <dbReference type="ChEBI" id="CHEBI:15378"/>
        <dbReference type="ChEBI" id="CHEBI:16880"/>
        <dbReference type="ChEBI" id="CHEBI:30616"/>
        <dbReference type="ChEBI" id="CHEBI:58226"/>
        <dbReference type="ChEBI" id="CHEBI:456216"/>
        <dbReference type="EC" id="2.7.1.16"/>
    </reaction>
</comment>
<comment type="pathway">
    <text evidence="1">Carbohydrate degradation; L-arabinose degradation via L-ribulose; D-xylulose 5-phosphate from L-arabinose (bacterial route): step 2/3.</text>
</comment>
<comment type="similarity">
    <text evidence="1">Belongs to the ribulokinase family.</text>
</comment>
<name>ARAB_BACLD</name>
<keyword id="KW-0054">Arabinose catabolism</keyword>
<keyword id="KW-0067">ATP-binding</keyword>
<keyword id="KW-0119">Carbohydrate metabolism</keyword>
<keyword id="KW-0418">Kinase</keyword>
<keyword id="KW-0547">Nucleotide-binding</keyword>
<keyword id="KW-1185">Reference proteome</keyword>
<keyword id="KW-0808">Transferase</keyword>
<organism>
    <name type="scientific">Bacillus licheniformis (strain ATCC 14580 / DSM 13 / JCM 2505 / CCUG 7422 / NBRC 12200 / NCIMB 9375 / NCTC 10341 / NRRL NRS-1264 / Gibson 46)</name>
    <dbReference type="NCBI Taxonomy" id="279010"/>
    <lineage>
        <taxon>Bacteria</taxon>
        <taxon>Bacillati</taxon>
        <taxon>Bacillota</taxon>
        <taxon>Bacilli</taxon>
        <taxon>Bacillales</taxon>
        <taxon>Bacillaceae</taxon>
        <taxon>Bacillus</taxon>
    </lineage>
</organism>
<evidence type="ECO:0000255" key="1">
    <source>
        <dbReference type="HAMAP-Rule" id="MF_00520"/>
    </source>
</evidence>
<reference key="1">
    <citation type="journal article" date="2004" name="J. Mol. Microbiol. Biotechnol.">
        <title>The complete genome sequence of Bacillus licheniformis DSM13, an organism with great industrial potential.</title>
        <authorList>
            <person name="Veith B."/>
            <person name="Herzberg C."/>
            <person name="Steckel S."/>
            <person name="Feesche J."/>
            <person name="Maurer K.H."/>
            <person name="Ehrenreich P."/>
            <person name="Baeumer S."/>
            <person name="Henne A."/>
            <person name="Liesegang H."/>
            <person name="Merkl R."/>
            <person name="Ehrenreich A."/>
            <person name="Gottschalk G."/>
        </authorList>
    </citation>
    <scope>NUCLEOTIDE SEQUENCE [LARGE SCALE GENOMIC DNA]</scope>
    <source>
        <strain>ATCC 14580 / DSM 13 / JCM 2505 / CCUG 7422 / NBRC 12200 / NCIMB 9375 / NCTC 10341 / NRRL NRS-1264 / Gibson 46</strain>
    </source>
</reference>
<reference key="2">
    <citation type="journal article" date="2004" name="Genome Biol.">
        <title>Complete genome sequence of the industrial bacterium Bacillus licheniformis and comparisons with closely related Bacillus species.</title>
        <authorList>
            <person name="Rey M.W."/>
            <person name="Ramaiya P."/>
            <person name="Nelson B.A."/>
            <person name="Brody-Karpin S.D."/>
            <person name="Zaretsky E.J."/>
            <person name="Tang M."/>
            <person name="Lopez de Leon A."/>
            <person name="Xiang H."/>
            <person name="Gusti V."/>
            <person name="Clausen I.G."/>
            <person name="Olsen P.B."/>
            <person name="Rasmussen M.D."/>
            <person name="Andersen J.T."/>
            <person name="Joergensen P.L."/>
            <person name="Larsen T.S."/>
            <person name="Sorokin A."/>
            <person name="Bolotin A."/>
            <person name="Lapidus A."/>
            <person name="Galleron N."/>
            <person name="Ehrlich S.D."/>
            <person name="Berka R.M."/>
        </authorList>
    </citation>
    <scope>NUCLEOTIDE SEQUENCE [LARGE SCALE GENOMIC DNA]</scope>
    <source>
        <strain>ATCC 14580 / DSM 13 / JCM 2505 / CCUG 7422 / NBRC 12200 / NCIMB 9375 / NCTC 10341 / NRRL NRS-1264 / Gibson 46</strain>
    </source>
</reference>
<proteinExistence type="inferred from homology"/>